<organism>
    <name type="scientific">Francisella tularensis subsp. tularensis (strain WY96-3418)</name>
    <dbReference type="NCBI Taxonomy" id="418136"/>
    <lineage>
        <taxon>Bacteria</taxon>
        <taxon>Pseudomonadati</taxon>
        <taxon>Pseudomonadota</taxon>
        <taxon>Gammaproteobacteria</taxon>
        <taxon>Thiotrichales</taxon>
        <taxon>Francisellaceae</taxon>
        <taxon>Francisella</taxon>
    </lineage>
</organism>
<reference key="1">
    <citation type="journal article" date="2007" name="PLoS ONE">
        <title>Complete genomic characterization of a pathogenic A.II strain of Francisella tularensis subspecies tularensis.</title>
        <authorList>
            <person name="Beckstrom-Sternberg S.M."/>
            <person name="Auerbach R.K."/>
            <person name="Godbole S."/>
            <person name="Pearson J.V."/>
            <person name="Beckstrom-Sternberg J.S."/>
            <person name="Deng Z."/>
            <person name="Munk C."/>
            <person name="Kubota K."/>
            <person name="Zhou Y."/>
            <person name="Bruce D."/>
            <person name="Noronha J."/>
            <person name="Scheuermann R.H."/>
            <person name="Wang A."/>
            <person name="Wei X."/>
            <person name="Wang J."/>
            <person name="Hao J."/>
            <person name="Wagner D.M."/>
            <person name="Brettin T.S."/>
            <person name="Brown N."/>
            <person name="Gilna P."/>
            <person name="Keim P.S."/>
        </authorList>
    </citation>
    <scope>NUCLEOTIDE SEQUENCE [LARGE SCALE GENOMIC DNA]</scope>
    <source>
        <strain>WY96-3418</strain>
    </source>
</reference>
<comment type="subunit">
    <text evidence="1">Part of the 50S ribosomal subunit.</text>
</comment>
<comment type="similarity">
    <text evidence="1">Belongs to the universal ribosomal protein uL30 family.</text>
</comment>
<protein>
    <recommendedName>
        <fullName evidence="1">Large ribosomal subunit protein uL30</fullName>
    </recommendedName>
    <alternativeName>
        <fullName evidence="2">50S ribosomal protein L30</fullName>
    </alternativeName>
</protein>
<accession>A4IZR6</accession>
<keyword id="KW-0687">Ribonucleoprotein</keyword>
<keyword id="KW-0689">Ribosomal protein</keyword>
<proteinExistence type="inferred from homology"/>
<gene>
    <name evidence="1" type="primary">rpmD</name>
    <name type="ordered locus">FTW_1740</name>
</gene>
<name>RL30_FRATW</name>
<evidence type="ECO:0000255" key="1">
    <source>
        <dbReference type="HAMAP-Rule" id="MF_01371"/>
    </source>
</evidence>
<evidence type="ECO:0000305" key="2"/>
<dbReference type="EMBL" id="CP000608">
    <property type="protein sequence ID" value="ABO47416.1"/>
    <property type="molecule type" value="Genomic_DNA"/>
</dbReference>
<dbReference type="RefSeq" id="WP_003014363.1">
    <property type="nucleotide sequence ID" value="NC_009257.1"/>
</dbReference>
<dbReference type="SMR" id="A4IZR6"/>
<dbReference type="GeneID" id="75264243"/>
<dbReference type="KEGG" id="ftw:FTW_1740"/>
<dbReference type="HOGENOM" id="CLU_131047_1_4_6"/>
<dbReference type="GO" id="GO:0022625">
    <property type="term" value="C:cytosolic large ribosomal subunit"/>
    <property type="evidence" value="ECO:0007669"/>
    <property type="project" value="TreeGrafter"/>
</dbReference>
<dbReference type="GO" id="GO:0003735">
    <property type="term" value="F:structural constituent of ribosome"/>
    <property type="evidence" value="ECO:0007669"/>
    <property type="project" value="InterPro"/>
</dbReference>
<dbReference type="GO" id="GO:0006412">
    <property type="term" value="P:translation"/>
    <property type="evidence" value="ECO:0007669"/>
    <property type="project" value="UniProtKB-UniRule"/>
</dbReference>
<dbReference type="CDD" id="cd01658">
    <property type="entry name" value="Ribosomal_L30"/>
    <property type="match status" value="1"/>
</dbReference>
<dbReference type="FunFam" id="3.30.1390.20:FF:000001">
    <property type="entry name" value="50S ribosomal protein L30"/>
    <property type="match status" value="1"/>
</dbReference>
<dbReference type="Gene3D" id="3.30.1390.20">
    <property type="entry name" value="Ribosomal protein L30, ferredoxin-like fold domain"/>
    <property type="match status" value="1"/>
</dbReference>
<dbReference type="HAMAP" id="MF_01371_B">
    <property type="entry name" value="Ribosomal_uL30_B"/>
    <property type="match status" value="1"/>
</dbReference>
<dbReference type="InterPro" id="IPR036919">
    <property type="entry name" value="Ribo_uL30_ferredoxin-like_sf"/>
</dbReference>
<dbReference type="InterPro" id="IPR005996">
    <property type="entry name" value="Ribosomal_uL30_bac-type"/>
</dbReference>
<dbReference type="InterPro" id="IPR016082">
    <property type="entry name" value="Ribosomal_uL30_ferredoxin-like"/>
</dbReference>
<dbReference type="NCBIfam" id="TIGR01308">
    <property type="entry name" value="rpmD_bact"/>
    <property type="match status" value="1"/>
</dbReference>
<dbReference type="PANTHER" id="PTHR15892:SF2">
    <property type="entry name" value="LARGE RIBOSOMAL SUBUNIT PROTEIN UL30M"/>
    <property type="match status" value="1"/>
</dbReference>
<dbReference type="PANTHER" id="PTHR15892">
    <property type="entry name" value="MITOCHONDRIAL RIBOSOMAL PROTEIN L30"/>
    <property type="match status" value="1"/>
</dbReference>
<dbReference type="Pfam" id="PF00327">
    <property type="entry name" value="Ribosomal_L30"/>
    <property type="match status" value="1"/>
</dbReference>
<dbReference type="PIRSF" id="PIRSF002211">
    <property type="entry name" value="Ribosomal_L30_bac-type"/>
    <property type="match status" value="1"/>
</dbReference>
<dbReference type="SUPFAM" id="SSF55129">
    <property type="entry name" value="Ribosomal protein L30p/L7e"/>
    <property type="match status" value="1"/>
</dbReference>
<feature type="chain" id="PRO_1000056043" description="Large ribosomal subunit protein uL30">
    <location>
        <begin position="1"/>
        <end position="61"/>
    </location>
</feature>
<sequence length="61" mass="6871">MTQAKTFKVTLVKSLIGRKENHIASARGLGLRKINHTVEVLDTPENRGMANKIYYMVKIEG</sequence>